<sequence length="160" mass="17503">MSVTLHTNLGDIKCEIFCDEVPKSAENFLALCASGYYDGTIFHRNIKGFMIQGGDPKGTGKGGTSIWGKKFNDEIRDSLKHNARGMLSMANSGPNTNGSQFFITYAKQPHLNGLYTIFGKVIHGFEVLDIMEKTQTGPGDRPLAEIRLNRVTIHANPLAG</sequence>
<comment type="function">
    <text evidence="1">PPIases accelerate the folding of proteins. It catalyzes the cis-trans isomerization of proline imidic peptide bonds in oligopeptides (By similarity).</text>
</comment>
<comment type="catalytic activity">
    <reaction>
        <text>[protein]-peptidylproline (omega=180) = [protein]-peptidylproline (omega=0)</text>
        <dbReference type="Rhea" id="RHEA:16237"/>
        <dbReference type="Rhea" id="RHEA-COMP:10747"/>
        <dbReference type="Rhea" id="RHEA-COMP:10748"/>
        <dbReference type="ChEBI" id="CHEBI:83833"/>
        <dbReference type="ChEBI" id="CHEBI:83834"/>
        <dbReference type="EC" id="5.2.1.8"/>
    </reaction>
</comment>
<comment type="subcellular location">
    <subcellularLocation>
        <location evidence="1">Cytoplasm</location>
    </subcellularLocation>
</comment>
<comment type="tissue specificity">
    <text evidence="3 4">Ubiquitous.</text>
</comment>
<comment type="similarity">
    <text evidence="5">Belongs to the cyclophilin-type PPIase family.</text>
</comment>
<proteinExistence type="evidence at transcript level"/>
<keyword id="KW-0143">Chaperone</keyword>
<keyword id="KW-0963">Cytoplasm</keyword>
<keyword id="KW-0413">Isomerase</keyword>
<keyword id="KW-1185">Reference proteome</keyword>
<keyword id="KW-0697">Rotamase</keyword>
<protein>
    <recommendedName>
        <fullName>Peptidyl-prolyl cis-trans isomerase CYP18-1</fullName>
        <shortName>PPIase CYP18-1</shortName>
        <ecNumber>5.2.1.8</ecNumber>
    </recommendedName>
    <alternativeName>
        <fullName>Cyclophilin of 18 kDa 1</fullName>
    </alternativeName>
    <alternativeName>
        <fullName>Cyclophilin-18-1</fullName>
    </alternativeName>
</protein>
<accession>Q9LPC7</accession>
<reference key="1">
    <citation type="journal article" date="2004" name="Plant Physiol.">
        <title>The Arabidopsis cyclophilin gene family.</title>
        <authorList>
            <person name="Romano P.G.N."/>
            <person name="Horton P."/>
            <person name="Gray J.E."/>
        </authorList>
    </citation>
    <scope>NUCLEOTIDE SEQUENCE [MRNA]</scope>
    <scope>TISSUE SPECIFICITY</scope>
    <scope>GENE FAMILY</scope>
    <scope>NOMENCLATURE</scope>
</reference>
<reference key="2">
    <citation type="journal article" date="2000" name="Nature">
        <title>Sequence and analysis of chromosome 1 of the plant Arabidopsis thaliana.</title>
        <authorList>
            <person name="Theologis A."/>
            <person name="Ecker J.R."/>
            <person name="Palm C.J."/>
            <person name="Federspiel N.A."/>
            <person name="Kaul S."/>
            <person name="White O."/>
            <person name="Alonso J."/>
            <person name="Altafi H."/>
            <person name="Araujo R."/>
            <person name="Bowman C.L."/>
            <person name="Brooks S.Y."/>
            <person name="Buehler E."/>
            <person name="Chan A."/>
            <person name="Chao Q."/>
            <person name="Chen H."/>
            <person name="Cheuk R.F."/>
            <person name="Chin C.W."/>
            <person name="Chung M.K."/>
            <person name="Conn L."/>
            <person name="Conway A.B."/>
            <person name="Conway A.R."/>
            <person name="Creasy T.H."/>
            <person name="Dewar K."/>
            <person name="Dunn P."/>
            <person name="Etgu P."/>
            <person name="Feldblyum T.V."/>
            <person name="Feng J.-D."/>
            <person name="Fong B."/>
            <person name="Fujii C.Y."/>
            <person name="Gill J.E."/>
            <person name="Goldsmith A.D."/>
            <person name="Haas B."/>
            <person name="Hansen N.F."/>
            <person name="Hughes B."/>
            <person name="Huizar L."/>
            <person name="Hunter J.L."/>
            <person name="Jenkins J."/>
            <person name="Johnson-Hopson C."/>
            <person name="Khan S."/>
            <person name="Khaykin E."/>
            <person name="Kim C.J."/>
            <person name="Koo H.L."/>
            <person name="Kremenetskaia I."/>
            <person name="Kurtz D.B."/>
            <person name="Kwan A."/>
            <person name="Lam B."/>
            <person name="Langin-Hooper S."/>
            <person name="Lee A."/>
            <person name="Lee J.M."/>
            <person name="Lenz C.A."/>
            <person name="Li J.H."/>
            <person name="Li Y.-P."/>
            <person name="Lin X."/>
            <person name="Liu S.X."/>
            <person name="Liu Z.A."/>
            <person name="Luros J.S."/>
            <person name="Maiti R."/>
            <person name="Marziali A."/>
            <person name="Militscher J."/>
            <person name="Miranda M."/>
            <person name="Nguyen M."/>
            <person name="Nierman W.C."/>
            <person name="Osborne B.I."/>
            <person name="Pai G."/>
            <person name="Peterson J."/>
            <person name="Pham P.K."/>
            <person name="Rizzo M."/>
            <person name="Rooney T."/>
            <person name="Rowley D."/>
            <person name="Sakano H."/>
            <person name="Salzberg S.L."/>
            <person name="Schwartz J.R."/>
            <person name="Shinn P."/>
            <person name="Southwick A.M."/>
            <person name="Sun H."/>
            <person name="Tallon L.J."/>
            <person name="Tambunga G."/>
            <person name="Toriumi M.J."/>
            <person name="Town C.D."/>
            <person name="Utterback T."/>
            <person name="Van Aken S."/>
            <person name="Vaysberg M."/>
            <person name="Vysotskaia V.S."/>
            <person name="Walker M."/>
            <person name="Wu D."/>
            <person name="Yu G."/>
            <person name="Fraser C.M."/>
            <person name="Venter J.C."/>
            <person name="Davis R.W."/>
        </authorList>
    </citation>
    <scope>NUCLEOTIDE SEQUENCE [LARGE SCALE GENOMIC DNA]</scope>
    <source>
        <strain>cv. Columbia</strain>
    </source>
</reference>
<reference key="3">
    <citation type="journal article" date="2017" name="Plant J.">
        <title>Araport11: a complete reannotation of the Arabidopsis thaliana reference genome.</title>
        <authorList>
            <person name="Cheng C.Y."/>
            <person name="Krishnakumar V."/>
            <person name="Chan A.P."/>
            <person name="Thibaud-Nissen F."/>
            <person name="Schobel S."/>
            <person name="Town C.D."/>
        </authorList>
    </citation>
    <scope>GENOME REANNOTATION</scope>
    <source>
        <strain>cv. Columbia</strain>
    </source>
</reference>
<reference key="4">
    <citation type="journal article" date="2003" name="Science">
        <title>Empirical analysis of transcriptional activity in the Arabidopsis genome.</title>
        <authorList>
            <person name="Yamada K."/>
            <person name="Lim J."/>
            <person name="Dale J.M."/>
            <person name="Chen H."/>
            <person name="Shinn P."/>
            <person name="Palm C.J."/>
            <person name="Southwick A.M."/>
            <person name="Wu H.C."/>
            <person name="Kim C.J."/>
            <person name="Nguyen M."/>
            <person name="Pham P.K."/>
            <person name="Cheuk R.F."/>
            <person name="Karlin-Newmann G."/>
            <person name="Liu S.X."/>
            <person name="Lam B."/>
            <person name="Sakano H."/>
            <person name="Wu T."/>
            <person name="Yu G."/>
            <person name="Miranda M."/>
            <person name="Quach H.L."/>
            <person name="Tripp M."/>
            <person name="Chang C.H."/>
            <person name="Lee J.M."/>
            <person name="Toriumi M.J."/>
            <person name="Chan M.M."/>
            <person name="Tang C.C."/>
            <person name="Onodera C.S."/>
            <person name="Deng J.M."/>
            <person name="Akiyama K."/>
            <person name="Ansari Y."/>
            <person name="Arakawa T."/>
            <person name="Banh J."/>
            <person name="Banno F."/>
            <person name="Bowser L."/>
            <person name="Brooks S.Y."/>
            <person name="Carninci P."/>
            <person name="Chao Q."/>
            <person name="Choy N."/>
            <person name="Enju A."/>
            <person name="Goldsmith A.D."/>
            <person name="Gurjal M."/>
            <person name="Hansen N.F."/>
            <person name="Hayashizaki Y."/>
            <person name="Johnson-Hopson C."/>
            <person name="Hsuan V.W."/>
            <person name="Iida K."/>
            <person name="Karnes M."/>
            <person name="Khan S."/>
            <person name="Koesema E."/>
            <person name="Ishida J."/>
            <person name="Jiang P.X."/>
            <person name="Jones T."/>
            <person name="Kawai J."/>
            <person name="Kamiya A."/>
            <person name="Meyers C."/>
            <person name="Nakajima M."/>
            <person name="Narusaka M."/>
            <person name="Seki M."/>
            <person name="Sakurai T."/>
            <person name="Satou M."/>
            <person name="Tamse R."/>
            <person name="Vaysberg M."/>
            <person name="Wallender E.K."/>
            <person name="Wong C."/>
            <person name="Yamamura Y."/>
            <person name="Yuan S."/>
            <person name="Shinozaki K."/>
            <person name="Davis R.W."/>
            <person name="Theologis A."/>
            <person name="Ecker J.R."/>
        </authorList>
    </citation>
    <scope>NUCLEOTIDE SEQUENCE [LARGE SCALE MRNA]</scope>
    <source>
        <strain>cv. Columbia</strain>
    </source>
</reference>
<reference key="5">
    <citation type="journal article" date="2004" name="Plant Physiol.">
        <title>Immunophilins and parvulins. Superfamily of peptidyl prolyl isomerases in Arabidopsis.</title>
        <authorList>
            <person name="He Z."/>
            <person name="Li L."/>
            <person name="Luan S."/>
        </authorList>
    </citation>
    <scope>TISSUE SPECIFICITY</scope>
    <scope>GENE FAMILY</scope>
    <scope>NOMENCLATURE</scope>
</reference>
<dbReference type="EC" id="5.2.1.8"/>
<dbReference type="EMBL" id="AY568515">
    <property type="protein sequence ID" value="AAS75298.1"/>
    <property type="molecule type" value="mRNA"/>
</dbReference>
<dbReference type="EMBL" id="AC020622">
    <property type="protein sequence ID" value="AAF76472.1"/>
    <property type="molecule type" value="Genomic_DNA"/>
</dbReference>
<dbReference type="EMBL" id="CP002684">
    <property type="protein sequence ID" value="AEE27356.1"/>
    <property type="molecule type" value="Genomic_DNA"/>
</dbReference>
<dbReference type="EMBL" id="BT002879">
    <property type="protein sequence ID" value="AAO22696.1"/>
    <property type="molecule type" value="mRNA"/>
</dbReference>
<dbReference type="EMBL" id="BT004403">
    <property type="protein sequence ID" value="AAO42397.1"/>
    <property type="molecule type" value="mRNA"/>
</dbReference>
<dbReference type="PIR" id="C86151">
    <property type="entry name" value="C86151"/>
</dbReference>
<dbReference type="RefSeq" id="NP_171696.2">
    <property type="nucleotide sequence ID" value="NM_100074.4"/>
</dbReference>
<dbReference type="SMR" id="Q9LPC7"/>
<dbReference type="BioGRID" id="24544">
    <property type="interactions" value="1"/>
</dbReference>
<dbReference type="FunCoup" id="Q9LPC7">
    <property type="interactions" value="3479"/>
</dbReference>
<dbReference type="STRING" id="3702.Q9LPC7"/>
<dbReference type="PaxDb" id="3702-AT1G01940.1"/>
<dbReference type="ProteomicsDB" id="240858"/>
<dbReference type="EnsemblPlants" id="AT1G01940.1">
    <property type="protein sequence ID" value="AT1G01940.1"/>
    <property type="gene ID" value="AT1G01940"/>
</dbReference>
<dbReference type="GeneID" id="839309"/>
<dbReference type="Gramene" id="AT1G01940.1">
    <property type="protein sequence ID" value="AT1G01940.1"/>
    <property type="gene ID" value="AT1G01940"/>
</dbReference>
<dbReference type="KEGG" id="ath:AT1G01940"/>
<dbReference type="Araport" id="AT1G01940"/>
<dbReference type="TAIR" id="AT1G01940"/>
<dbReference type="eggNOG" id="KOG0884">
    <property type="taxonomic scope" value="Eukaryota"/>
</dbReference>
<dbReference type="HOGENOM" id="CLU_012062_16_3_1"/>
<dbReference type="InParanoid" id="Q9LPC7"/>
<dbReference type="OMA" id="VPFHRVM"/>
<dbReference type="OrthoDB" id="271386at2759"/>
<dbReference type="PhylomeDB" id="Q9LPC7"/>
<dbReference type="PRO" id="PR:Q9LPC7"/>
<dbReference type="Proteomes" id="UP000006548">
    <property type="component" value="Chromosome 1"/>
</dbReference>
<dbReference type="ExpressionAtlas" id="Q9LPC7">
    <property type="expression patterns" value="baseline and differential"/>
</dbReference>
<dbReference type="GO" id="GO:0005737">
    <property type="term" value="C:cytoplasm"/>
    <property type="evidence" value="ECO:0007669"/>
    <property type="project" value="UniProtKB-SubCell"/>
</dbReference>
<dbReference type="GO" id="GO:0003755">
    <property type="term" value="F:peptidyl-prolyl cis-trans isomerase activity"/>
    <property type="evidence" value="ECO:0007669"/>
    <property type="project" value="UniProtKB-KW"/>
</dbReference>
<dbReference type="GO" id="GO:0006457">
    <property type="term" value="P:protein folding"/>
    <property type="evidence" value="ECO:0007669"/>
    <property type="project" value="InterPro"/>
</dbReference>
<dbReference type="CDD" id="cd01928">
    <property type="entry name" value="Cyclophilin_PPIL3_like"/>
    <property type="match status" value="1"/>
</dbReference>
<dbReference type="FunFam" id="2.40.100.10:FF:000026">
    <property type="entry name" value="Peptidyl-prolyl cis-trans isomerase"/>
    <property type="match status" value="1"/>
</dbReference>
<dbReference type="Gene3D" id="2.40.100.10">
    <property type="entry name" value="Cyclophilin-like"/>
    <property type="match status" value="1"/>
</dbReference>
<dbReference type="InterPro" id="IPR029000">
    <property type="entry name" value="Cyclophilin-like_dom_sf"/>
</dbReference>
<dbReference type="InterPro" id="IPR024936">
    <property type="entry name" value="Cyclophilin-type_PPIase"/>
</dbReference>
<dbReference type="InterPro" id="IPR020892">
    <property type="entry name" value="Cyclophilin-type_PPIase_CS"/>
</dbReference>
<dbReference type="InterPro" id="IPR002130">
    <property type="entry name" value="Cyclophilin-type_PPIase_dom"/>
</dbReference>
<dbReference type="InterPro" id="IPR044666">
    <property type="entry name" value="Cyclophilin_A-like"/>
</dbReference>
<dbReference type="PANTHER" id="PTHR45625:SF2">
    <property type="entry name" value="PEPTIDYL-PROLYL CIS-TRANS ISOMERASE-LIKE 3"/>
    <property type="match status" value="1"/>
</dbReference>
<dbReference type="PANTHER" id="PTHR45625">
    <property type="entry name" value="PEPTIDYL-PROLYL CIS-TRANS ISOMERASE-RELATED"/>
    <property type="match status" value="1"/>
</dbReference>
<dbReference type="Pfam" id="PF00160">
    <property type="entry name" value="Pro_isomerase"/>
    <property type="match status" value="1"/>
</dbReference>
<dbReference type="PIRSF" id="PIRSF001467">
    <property type="entry name" value="Peptidylpro_ismrse"/>
    <property type="match status" value="1"/>
</dbReference>
<dbReference type="PRINTS" id="PR00153">
    <property type="entry name" value="CSAPPISMRASE"/>
</dbReference>
<dbReference type="SUPFAM" id="SSF50891">
    <property type="entry name" value="Cyclophilin-like"/>
    <property type="match status" value="1"/>
</dbReference>
<dbReference type="PROSITE" id="PS00170">
    <property type="entry name" value="CSA_PPIASE_1"/>
    <property type="match status" value="1"/>
</dbReference>
<dbReference type="PROSITE" id="PS50072">
    <property type="entry name" value="CSA_PPIASE_2"/>
    <property type="match status" value="1"/>
</dbReference>
<feature type="chain" id="PRO_5001126578" description="Peptidyl-prolyl cis-trans isomerase CYP18-1">
    <location>
        <begin position="1"/>
        <end position="160"/>
    </location>
</feature>
<feature type="domain" description="PPIase cyclophilin-type" evidence="2">
    <location>
        <begin position="3"/>
        <end position="153"/>
    </location>
</feature>
<organism>
    <name type="scientific">Arabidopsis thaliana</name>
    <name type="common">Mouse-ear cress</name>
    <dbReference type="NCBI Taxonomy" id="3702"/>
    <lineage>
        <taxon>Eukaryota</taxon>
        <taxon>Viridiplantae</taxon>
        <taxon>Streptophyta</taxon>
        <taxon>Embryophyta</taxon>
        <taxon>Tracheophyta</taxon>
        <taxon>Spermatophyta</taxon>
        <taxon>Magnoliopsida</taxon>
        <taxon>eudicotyledons</taxon>
        <taxon>Gunneridae</taxon>
        <taxon>Pentapetalae</taxon>
        <taxon>rosids</taxon>
        <taxon>malvids</taxon>
        <taxon>Brassicales</taxon>
        <taxon>Brassicaceae</taxon>
        <taxon>Camelineae</taxon>
        <taxon>Arabidopsis</taxon>
    </lineage>
</organism>
<name>CP18A_ARATH</name>
<evidence type="ECO:0000250" key="1"/>
<evidence type="ECO:0000255" key="2">
    <source>
        <dbReference type="PROSITE-ProRule" id="PRU00156"/>
    </source>
</evidence>
<evidence type="ECO:0000269" key="3">
    <source>
    </source>
</evidence>
<evidence type="ECO:0000269" key="4">
    <source>
    </source>
</evidence>
<evidence type="ECO:0000305" key="5"/>
<gene>
    <name type="primary">CYP18-1</name>
    <name type="ordered locus">At1g01940</name>
    <name type="ORF">F22M8.7</name>
</gene>